<feature type="chain" id="PRO_0000307656" description="Large ribosomal subunit protein uL1">
    <location>
        <begin position="1"/>
        <end position="209"/>
    </location>
</feature>
<organism>
    <name type="scientific">Neorickettsia sennetsu (strain ATCC VR-367 / Miyayama)</name>
    <name type="common">Ehrlichia sennetsu</name>
    <dbReference type="NCBI Taxonomy" id="222891"/>
    <lineage>
        <taxon>Bacteria</taxon>
        <taxon>Pseudomonadati</taxon>
        <taxon>Pseudomonadota</taxon>
        <taxon>Alphaproteobacteria</taxon>
        <taxon>Rickettsiales</taxon>
        <taxon>Anaplasmataceae</taxon>
        <taxon>Neorickettsia</taxon>
    </lineage>
</organism>
<sequence length="209" mass="23106">MREIVSADDALRKLLEKACKFNESVDVAVHFFSKDSVKIGCVFKYPFYFGRVLVFCGEPQMAQVIDENVTYGGEELIERIKAKKNFVKGYKYSLASPPMMSKLSKIARILGPRGLMPDSKYGLVTHDIAAAVTAILGGKALFKTNKAGVMHSKIGNLGMGFDKLRENFQIFCESVFATRPKNVSLQSYVRSISVSSTMGDGCFVDFLAL</sequence>
<protein>
    <recommendedName>
        <fullName evidence="2">Large ribosomal subunit protein uL1</fullName>
    </recommendedName>
    <alternativeName>
        <fullName>50S ribosomal protein L1</fullName>
    </alternativeName>
</protein>
<accession>Q2GD87</accession>
<proteinExistence type="inferred from homology"/>
<dbReference type="EMBL" id="CP000237">
    <property type="protein sequence ID" value="ABD46125.1"/>
    <property type="molecule type" value="Genomic_DNA"/>
</dbReference>
<dbReference type="RefSeq" id="WP_011452065.1">
    <property type="nucleotide sequence ID" value="NC_007798.1"/>
</dbReference>
<dbReference type="SMR" id="Q2GD87"/>
<dbReference type="STRING" id="222891.NSE_0681"/>
<dbReference type="KEGG" id="nse:NSE_0681"/>
<dbReference type="eggNOG" id="COG0081">
    <property type="taxonomic scope" value="Bacteria"/>
</dbReference>
<dbReference type="HOGENOM" id="CLU_062853_0_0_5"/>
<dbReference type="OrthoDB" id="9803740at2"/>
<dbReference type="Proteomes" id="UP000001942">
    <property type="component" value="Chromosome"/>
</dbReference>
<dbReference type="GO" id="GO:0015934">
    <property type="term" value="C:large ribosomal subunit"/>
    <property type="evidence" value="ECO:0007669"/>
    <property type="project" value="InterPro"/>
</dbReference>
<dbReference type="GO" id="GO:0019843">
    <property type="term" value="F:rRNA binding"/>
    <property type="evidence" value="ECO:0007669"/>
    <property type="project" value="UniProtKB-KW"/>
</dbReference>
<dbReference type="GO" id="GO:0003735">
    <property type="term" value="F:structural constituent of ribosome"/>
    <property type="evidence" value="ECO:0007669"/>
    <property type="project" value="InterPro"/>
</dbReference>
<dbReference type="GO" id="GO:0000049">
    <property type="term" value="F:tRNA binding"/>
    <property type="evidence" value="ECO:0007669"/>
    <property type="project" value="UniProtKB-KW"/>
</dbReference>
<dbReference type="GO" id="GO:0006417">
    <property type="term" value="P:regulation of translation"/>
    <property type="evidence" value="ECO:0007669"/>
    <property type="project" value="UniProtKB-KW"/>
</dbReference>
<dbReference type="GO" id="GO:0006412">
    <property type="term" value="P:translation"/>
    <property type="evidence" value="ECO:0007669"/>
    <property type="project" value="InterPro"/>
</dbReference>
<dbReference type="CDD" id="cd00403">
    <property type="entry name" value="Ribosomal_L1"/>
    <property type="match status" value="1"/>
</dbReference>
<dbReference type="Gene3D" id="3.30.190.20">
    <property type="match status" value="1"/>
</dbReference>
<dbReference type="Gene3D" id="3.40.50.790">
    <property type="match status" value="1"/>
</dbReference>
<dbReference type="InterPro" id="IPR002143">
    <property type="entry name" value="Ribosomal_uL1"/>
</dbReference>
<dbReference type="InterPro" id="IPR023674">
    <property type="entry name" value="Ribosomal_uL1-like"/>
</dbReference>
<dbReference type="InterPro" id="IPR028364">
    <property type="entry name" value="Ribosomal_uL1/biogenesis"/>
</dbReference>
<dbReference type="InterPro" id="IPR016095">
    <property type="entry name" value="Ribosomal_uL1_3-a/b-sand"/>
</dbReference>
<dbReference type="InterPro" id="IPR023673">
    <property type="entry name" value="Ribosomal_uL1_CS"/>
</dbReference>
<dbReference type="PANTHER" id="PTHR36427">
    <property type="entry name" value="54S RIBOSOMAL PROTEIN L1, MITOCHONDRIAL"/>
    <property type="match status" value="1"/>
</dbReference>
<dbReference type="PANTHER" id="PTHR36427:SF3">
    <property type="entry name" value="LARGE RIBOSOMAL SUBUNIT PROTEIN UL1M"/>
    <property type="match status" value="1"/>
</dbReference>
<dbReference type="Pfam" id="PF00687">
    <property type="entry name" value="Ribosomal_L1"/>
    <property type="match status" value="1"/>
</dbReference>
<dbReference type="PIRSF" id="PIRSF002155">
    <property type="entry name" value="Ribosomal_L1"/>
    <property type="match status" value="1"/>
</dbReference>
<dbReference type="SUPFAM" id="SSF56808">
    <property type="entry name" value="Ribosomal protein L1"/>
    <property type="match status" value="1"/>
</dbReference>
<dbReference type="PROSITE" id="PS01199">
    <property type="entry name" value="RIBOSOMAL_L1"/>
    <property type="match status" value="1"/>
</dbReference>
<evidence type="ECO:0000250" key="1"/>
<evidence type="ECO:0000305" key="2"/>
<name>RL1_NEOSM</name>
<comment type="function">
    <text evidence="1">Binds directly to 23S rRNA. The L1 stalk is quite mobile in the ribosome, and is involved in E site tRNA release (By similarity).</text>
</comment>
<comment type="function">
    <text evidence="1">Protein L1 is also a translational repressor protein, it controls the translation of the L11 operon by binding to its mRNA.</text>
</comment>
<comment type="subunit">
    <text evidence="1">Part of the 50S ribosomal subunit.</text>
</comment>
<comment type="similarity">
    <text evidence="2">Belongs to the universal ribosomal protein uL1 family.</text>
</comment>
<keyword id="KW-0678">Repressor</keyword>
<keyword id="KW-0687">Ribonucleoprotein</keyword>
<keyword id="KW-0689">Ribosomal protein</keyword>
<keyword id="KW-0694">RNA-binding</keyword>
<keyword id="KW-0699">rRNA-binding</keyword>
<keyword id="KW-0810">Translation regulation</keyword>
<keyword id="KW-0820">tRNA-binding</keyword>
<gene>
    <name type="primary">rplA</name>
    <name type="ordered locus">NSE_0681</name>
</gene>
<reference key="1">
    <citation type="journal article" date="2006" name="PLoS Genet.">
        <title>Comparative genomics of emerging human ehrlichiosis agents.</title>
        <authorList>
            <person name="Dunning Hotopp J.C."/>
            <person name="Lin M."/>
            <person name="Madupu R."/>
            <person name="Crabtree J."/>
            <person name="Angiuoli S.V."/>
            <person name="Eisen J.A."/>
            <person name="Seshadri R."/>
            <person name="Ren Q."/>
            <person name="Wu M."/>
            <person name="Utterback T.R."/>
            <person name="Smith S."/>
            <person name="Lewis M."/>
            <person name="Khouri H."/>
            <person name="Zhang C."/>
            <person name="Niu H."/>
            <person name="Lin Q."/>
            <person name="Ohashi N."/>
            <person name="Zhi N."/>
            <person name="Nelson W.C."/>
            <person name="Brinkac L.M."/>
            <person name="Dodson R.J."/>
            <person name="Rosovitz M.J."/>
            <person name="Sundaram J.P."/>
            <person name="Daugherty S.C."/>
            <person name="Davidsen T."/>
            <person name="Durkin A.S."/>
            <person name="Gwinn M.L."/>
            <person name="Haft D.H."/>
            <person name="Selengut J.D."/>
            <person name="Sullivan S.A."/>
            <person name="Zafar N."/>
            <person name="Zhou L."/>
            <person name="Benahmed F."/>
            <person name="Forberger H."/>
            <person name="Halpin R."/>
            <person name="Mulligan S."/>
            <person name="Robinson J."/>
            <person name="White O."/>
            <person name="Rikihisa Y."/>
            <person name="Tettelin H."/>
        </authorList>
    </citation>
    <scope>NUCLEOTIDE SEQUENCE [LARGE SCALE GENOMIC DNA]</scope>
    <source>
        <strain>ATCC VR-367 / Miyayama</strain>
    </source>
</reference>